<comment type="subcellular location">
    <subcellularLocation>
        <location evidence="1">Secreted</location>
    </subcellularLocation>
</comment>
<comment type="tissue specificity">
    <text evidence="4">Expressed by the venom gland.</text>
</comment>
<comment type="domain">
    <text evidence="4">Has the structural arrangement of an alpha-helix connected to antiparallel beta-sheets by disulfide bonds (CS-alpha/beta).</text>
</comment>
<comment type="PTM">
    <text evidence="4">Contains 4 disulfide bonds.</text>
</comment>
<comment type="similarity">
    <text evidence="4">Belongs to the short scorpion toxin superfamily. Potassium channel inhibitor family. Alpha-KTx 27 subfamily.</text>
</comment>
<organism>
    <name type="scientific">Mesobuthus gibbosus</name>
    <name type="common">Mediterranean checkered scorpion</name>
    <name type="synonym">Buthus gibbosus</name>
    <dbReference type="NCBI Taxonomy" id="123226"/>
    <lineage>
        <taxon>Eukaryota</taxon>
        <taxon>Metazoa</taxon>
        <taxon>Ecdysozoa</taxon>
        <taxon>Arthropoda</taxon>
        <taxon>Chelicerata</taxon>
        <taxon>Arachnida</taxon>
        <taxon>Scorpiones</taxon>
        <taxon>Buthida</taxon>
        <taxon>Buthoidea</taxon>
        <taxon>Buthidae</taxon>
        <taxon>Mesobuthus</taxon>
    </lineage>
</organism>
<reference key="1">
    <citation type="journal article" date="2014" name="BMC Genomics">
        <title>The Mediterranean scorpion Mesobuthus gibbosus (Scorpiones, Buthidae): transcriptome analysis and organization of the genome encoding chlorotoxin-like peptides.</title>
        <authorList>
            <person name="Diego-Garcia E."/>
            <person name="Caliskan F."/>
            <person name="Tytgat J."/>
        </authorList>
    </citation>
    <scope>NUCLEOTIDE SEQUENCE [MRNA]</scope>
    <scope>NOMENCLATURE</scope>
    <source>
        <tissue>Venom gland</tissue>
    </source>
</reference>
<sequence length="73" mass="8479">MKFLFLTLVLLYFTAILVFIVFPSYAQIQTNASCTTSTHCVEPCRKRCLLIHKCINDKCTCYPRINICEKKNN</sequence>
<evidence type="ECO:0000250" key="1"/>
<evidence type="ECO:0000255" key="2"/>
<evidence type="ECO:0000303" key="3">
    <source>
    </source>
</evidence>
<evidence type="ECO:0000305" key="4"/>
<feature type="signal peptide" evidence="2">
    <location>
        <begin position="1"/>
        <end position="26"/>
    </location>
</feature>
<feature type="chain" id="PRO_0000433150" description="Potassium channel toxin alpha-KTx 27.4">
    <location>
        <begin position="27"/>
        <end position="73"/>
    </location>
</feature>
<proteinExistence type="inferred from homology"/>
<protein>
    <recommendedName>
        <fullName evidence="3">Potassium channel toxin alpha-KTx 27.4</fullName>
    </recommendedName>
    <alternativeName>
        <fullName evidence="3">Toxin Mgib23</fullName>
    </alternativeName>
</protein>
<name>KA274_MESGB</name>
<accession>A0A059UEE4</accession>
<keyword id="KW-1015">Disulfide bond</keyword>
<keyword id="KW-0964">Secreted</keyword>
<keyword id="KW-0732">Signal</keyword>
<dbReference type="EMBL" id="KF770821">
    <property type="protein sequence ID" value="AHZ63130.1"/>
    <property type="molecule type" value="mRNA"/>
</dbReference>
<dbReference type="SMR" id="A0A059UEE4"/>
<dbReference type="GO" id="GO:0005576">
    <property type="term" value="C:extracellular region"/>
    <property type="evidence" value="ECO:0007669"/>
    <property type="project" value="UniProtKB-SubCell"/>
</dbReference>
<dbReference type="GO" id="GO:0008200">
    <property type="term" value="F:ion channel inhibitor activity"/>
    <property type="evidence" value="ECO:0007669"/>
    <property type="project" value="InterPro"/>
</dbReference>
<dbReference type="Gene3D" id="3.30.30.10">
    <property type="entry name" value="Knottin, scorpion toxin-like"/>
    <property type="match status" value="1"/>
</dbReference>
<dbReference type="InterPro" id="IPR036574">
    <property type="entry name" value="Scorpion_toxin-like_sf"/>
</dbReference>
<dbReference type="InterPro" id="IPR001947">
    <property type="entry name" value="Scorpion_toxinS_K_inh"/>
</dbReference>
<dbReference type="Pfam" id="PF00451">
    <property type="entry name" value="Toxin_2"/>
    <property type="match status" value="1"/>
</dbReference>
<dbReference type="SUPFAM" id="SSF57095">
    <property type="entry name" value="Scorpion toxin-like"/>
    <property type="match status" value="1"/>
</dbReference>